<feature type="chain" id="PRO_0000235397" description="Holliday junction branch migration complex subunit RuvB">
    <location>
        <begin position="1"/>
        <end position="341"/>
    </location>
</feature>
<feature type="region of interest" description="Large ATPase domain (RuvB-L)" evidence="1">
    <location>
        <begin position="1"/>
        <end position="182"/>
    </location>
</feature>
<feature type="region of interest" description="Small ATPAse domain (RuvB-S)" evidence="1">
    <location>
        <begin position="183"/>
        <end position="253"/>
    </location>
</feature>
<feature type="region of interest" description="Head domain (RuvB-H)" evidence="1">
    <location>
        <begin position="256"/>
        <end position="341"/>
    </location>
</feature>
<feature type="binding site" evidence="1">
    <location>
        <position position="21"/>
    </location>
    <ligand>
        <name>ATP</name>
        <dbReference type="ChEBI" id="CHEBI:30616"/>
    </ligand>
</feature>
<feature type="binding site" evidence="1">
    <location>
        <position position="22"/>
    </location>
    <ligand>
        <name>ATP</name>
        <dbReference type="ChEBI" id="CHEBI:30616"/>
    </ligand>
</feature>
<feature type="binding site" evidence="1">
    <location>
        <position position="63"/>
    </location>
    <ligand>
        <name>ATP</name>
        <dbReference type="ChEBI" id="CHEBI:30616"/>
    </ligand>
</feature>
<feature type="binding site" evidence="1">
    <location>
        <position position="66"/>
    </location>
    <ligand>
        <name>ATP</name>
        <dbReference type="ChEBI" id="CHEBI:30616"/>
    </ligand>
</feature>
<feature type="binding site" evidence="1">
    <location>
        <position position="67"/>
    </location>
    <ligand>
        <name>ATP</name>
        <dbReference type="ChEBI" id="CHEBI:30616"/>
    </ligand>
</feature>
<feature type="binding site" evidence="1">
    <location>
        <position position="67"/>
    </location>
    <ligand>
        <name>Mg(2+)</name>
        <dbReference type="ChEBI" id="CHEBI:18420"/>
    </ligand>
</feature>
<feature type="binding site" evidence="1">
    <location>
        <position position="68"/>
    </location>
    <ligand>
        <name>ATP</name>
        <dbReference type="ChEBI" id="CHEBI:30616"/>
    </ligand>
</feature>
<feature type="binding site" evidence="1">
    <location>
        <begin position="129"/>
        <end position="131"/>
    </location>
    <ligand>
        <name>ATP</name>
        <dbReference type="ChEBI" id="CHEBI:30616"/>
    </ligand>
</feature>
<feature type="binding site" evidence="1">
    <location>
        <position position="172"/>
    </location>
    <ligand>
        <name>ATP</name>
        <dbReference type="ChEBI" id="CHEBI:30616"/>
    </ligand>
</feature>
<feature type="binding site" evidence="1">
    <location>
        <position position="182"/>
    </location>
    <ligand>
        <name>ATP</name>
        <dbReference type="ChEBI" id="CHEBI:30616"/>
    </ligand>
</feature>
<feature type="binding site" evidence="1">
    <location>
        <position position="219"/>
    </location>
    <ligand>
        <name>ATP</name>
        <dbReference type="ChEBI" id="CHEBI:30616"/>
    </ligand>
</feature>
<feature type="binding site" evidence="1">
    <location>
        <position position="292"/>
    </location>
    <ligand>
        <name>DNA</name>
        <dbReference type="ChEBI" id="CHEBI:16991"/>
    </ligand>
</feature>
<feature type="binding site" evidence="1">
    <location>
        <position position="311"/>
    </location>
    <ligand>
        <name>DNA</name>
        <dbReference type="ChEBI" id="CHEBI:16991"/>
    </ligand>
</feature>
<feature type="binding site" evidence="1">
    <location>
        <position position="316"/>
    </location>
    <ligand>
        <name>DNA</name>
        <dbReference type="ChEBI" id="CHEBI:16991"/>
    </ligand>
</feature>
<sequence>MTSSDPTLRPERLPEDMDRALRPQSLEEFVGQAEARANLRVFIESARMRGEAMDHTLFHGPPGLGKTTLAQIMARELGVGFRMTSGPVLAKPGDLAAILTNLEPRDVLFIDEIHRLSPVVEEVLYPALEDFALDLVIGEGPAARTVRIDLQPFTLVGATTRLGLLTTPLRDRFGIPTRLQFYTEDELDLIVARGARMMGVDSDPEGTREIARRARGTPRIAGRLLRRVVDFALVEGDGRLTQAIADRALTRLGVDHLGLDLGDRRYIGLIAENYGGGPVGIETIAAALSESRDAVEEVIEPYLLQQGLIQRTPRGRMLAHKAWRHMGIEPPKGPGQSDLFG</sequence>
<keyword id="KW-0067">ATP-binding</keyword>
<keyword id="KW-0963">Cytoplasm</keyword>
<keyword id="KW-0227">DNA damage</keyword>
<keyword id="KW-0233">DNA recombination</keyword>
<keyword id="KW-0234">DNA repair</keyword>
<keyword id="KW-0238">DNA-binding</keyword>
<keyword id="KW-0378">Hydrolase</keyword>
<keyword id="KW-0547">Nucleotide-binding</keyword>
<keyword id="KW-1185">Reference proteome</keyword>
<proteinExistence type="inferred from homology"/>
<reference key="1">
    <citation type="submission" date="2005-09" db="EMBL/GenBank/DDBJ databases">
        <title>Complete sequence of chromosome 1 of Rhodobacter sphaeroides 2.4.1.</title>
        <authorList>
            <person name="Copeland A."/>
            <person name="Lucas S."/>
            <person name="Lapidus A."/>
            <person name="Barry K."/>
            <person name="Detter J.C."/>
            <person name="Glavina T."/>
            <person name="Hammon N."/>
            <person name="Israni S."/>
            <person name="Pitluck S."/>
            <person name="Richardson P."/>
            <person name="Mackenzie C."/>
            <person name="Choudhary M."/>
            <person name="Larimer F."/>
            <person name="Hauser L.J."/>
            <person name="Land M."/>
            <person name="Donohue T.J."/>
            <person name="Kaplan S."/>
        </authorList>
    </citation>
    <scope>NUCLEOTIDE SEQUENCE [LARGE SCALE GENOMIC DNA]</scope>
    <source>
        <strain>ATCC 17023 / DSM 158 / JCM 6121 / CCUG 31486 / LMG 2827 / NBRC 12203 / NCIMB 8253 / ATH 2.4.1.</strain>
    </source>
</reference>
<name>RUVB_CERS4</name>
<dbReference type="EC" id="3.6.4.-" evidence="1"/>
<dbReference type="EMBL" id="CP000143">
    <property type="protein sequence ID" value="ABA79726.1"/>
    <property type="molecule type" value="Genomic_DNA"/>
</dbReference>
<dbReference type="RefSeq" id="WP_011338313.1">
    <property type="nucleotide sequence ID" value="NZ_CP030271.1"/>
</dbReference>
<dbReference type="RefSeq" id="YP_353627.1">
    <property type="nucleotide sequence ID" value="NC_007493.2"/>
</dbReference>
<dbReference type="SMR" id="Q3J0F8"/>
<dbReference type="STRING" id="272943.RSP_0553"/>
<dbReference type="EnsemblBacteria" id="ABA79726">
    <property type="protein sequence ID" value="ABA79726"/>
    <property type="gene ID" value="RSP_0553"/>
</dbReference>
<dbReference type="GeneID" id="67447287"/>
<dbReference type="KEGG" id="rsp:RSP_0553"/>
<dbReference type="PATRIC" id="fig|272943.9.peg.2504"/>
<dbReference type="eggNOG" id="COG2255">
    <property type="taxonomic scope" value="Bacteria"/>
</dbReference>
<dbReference type="OrthoDB" id="9804478at2"/>
<dbReference type="PhylomeDB" id="Q3J0F8"/>
<dbReference type="Proteomes" id="UP000002703">
    <property type="component" value="Chromosome 1"/>
</dbReference>
<dbReference type="GO" id="GO:0005737">
    <property type="term" value="C:cytoplasm"/>
    <property type="evidence" value="ECO:0007669"/>
    <property type="project" value="UniProtKB-SubCell"/>
</dbReference>
<dbReference type="GO" id="GO:0048476">
    <property type="term" value="C:Holliday junction resolvase complex"/>
    <property type="evidence" value="ECO:0007669"/>
    <property type="project" value="UniProtKB-UniRule"/>
</dbReference>
<dbReference type="GO" id="GO:0005524">
    <property type="term" value="F:ATP binding"/>
    <property type="evidence" value="ECO:0007669"/>
    <property type="project" value="UniProtKB-UniRule"/>
</dbReference>
<dbReference type="GO" id="GO:0016887">
    <property type="term" value="F:ATP hydrolysis activity"/>
    <property type="evidence" value="ECO:0007669"/>
    <property type="project" value="InterPro"/>
</dbReference>
<dbReference type="GO" id="GO:0000400">
    <property type="term" value="F:four-way junction DNA binding"/>
    <property type="evidence" value="ECO:0007669"/>
    <property type="project" value="UniProtKB-UniRule"/>
</dbReference>
<dbReference type="GO" id="GO:0009378">
    <property type="term" value="F:four-way junction helicase activity"/>
    <property type="evidence" value="ECO:0007669"/>
    <property type="project" value="InterPro"/>
</dbReference>
<dbReference type="GO" id="GO:0006310">
    <property type="term" value="P:DNA recombination"/>
    <property type="evidence" value="ECO:0007669"/>
    <property type="project" value="UniProtKB-UniRule"/>
</dbReference>
<dbReference type="GO" id="GO:0006281">
    <property type="term" value="P:DNA repair"/>
    <property type="evidence" value="ECO:0007669"/>
    <property type="project" value="UniProtKB-UniRule"/>
</dbReference>
<dbReference type="CDD" id="cd00009">
    <property type="entry name" value="AAA"/>
    <property type="match status" value="1"/>
</dbReference>
<dbReference type="Gene3D" id="1.10.8.60">
    <property type="match status" value="1"/>
</dbReference>
<dbReference type="Gene3D" id="3.40.50.300">
    <property type="entry name" value="P-loop containing nucleotide triphosphate hydrolases"/>
    <property type="match status" value="1"/>
</dbReference>
<dbReference type="Gene3D" id="1.10.10.10">
    <property type="entry name" value="Winged helix-like DNA-binding domain superfamily/Winged helix DNA-binding domain"/>
    <property type="match status" value="1"/>
</dbReference>
<dbReference type="HAMAP" id="MF_00016">
    <property type="entry name" value="DNA_HJ_migration_RuvB"/>
    <property type="match status" value="1"/>
</dbReference>
<dbReference type="InterPro" id="IPR003593">
    <property type="entry name" value="AAA+_ATPase"/>
</dbReference>
<dbReference type="InterPro" id="IPR041445">
    <property type="entry name" value="AAA_lid_4"/>
</dbReference>
<dbReference type="InterPro" id="IPR004605">
    <property type="entry name" value="DNA_helicase_Holl-junc_RuvB"/>
</dbReference>
<dbReference type="InterPro" id="IPR027417">
    <property type="entry name" value="P-loop_NTPase"/>
</dbReference>
<dbReference type="InterPro" id="IPR008824">
    <property type="entry name" value="RuvB-like_N"/>
</dbReference>
<dbReference type="InterPro" id="IPR008823">
    <property type="entry name" value="RuvB_C"/>
</dbReference>
<dbReference type="InterPro" id="IPR036388">
    <property type="entry name" value="WH-like_DNA-bd_sf"/>
</dbReference>
<dbReference type="InterPro" id="IPR036390">
    <property type="entry name" value="WH_DNA-bd_sf"/>
</dbReference>
<dbReference type="NCBIfam" id="NF000868">
    <property type="entry name" value="PRK00080.1"/>
    <property type="match status" value="1"/>
</dbReference>
<dbReference type="NCBIfam" id="TIGR00635">
    <property type="entry name" value="ruvB"/>
    <property type="match status" value="1"/>
</dbReference>
<dbReference type="PANTHER" id="PTHR42848">
    <property type="match status" value="1"/>
</dbReference>
<dbReference type="PANTHER" id="PTHR42848:SF1">
    <property type="entry name" value="HOLLIDAY JUNCTION BRANCH MIGRATION COMPLEX SUBUNIT RUVB"/>
    <property type="match status" value="1"/>
</dbReference>
<dbReference type="Pfam" id="PF17864">
    <property type="entry name" value="AAA_lid_4"/>
    <property type="match status" value="1"/>
</dbReference>
<dbReference type="Pfam" id="PF05491">
    <property type="entry name" value="RuvB_C"/>
    <property type="match status" value="1"/>
</dbReference>
<dbReference type="Pfam" id="PF05496">
    <property type="entry name" value="RuvB_N"/>
    <property type="match status" value="1"/>
</dbReference>
<dbReference type="SMART" id="SM00382">
    <property type="entry name" value="AAA"/>
    <property type="match status" value="1"/>
</dbReference>
<dbReference type="SUPFAM" id="SSF52540">
    <property type="entry name" value="P-loop containing nucleoside triphosphate hydrolases"/>
    <property type="match status" value="1"/>
</dbReference>
<dbReference type="SUPFAM" id="SSF46785">
    <property type="entry name" value="Winged helix' DNA-binding domain"/>
    <property type="match status" value="1"/>
</dbReference>
<gene>
    <name evidence="1" type="primary">ruvB</name>
    <name type="ordered locus">RHOS4_21580</name>
    <name type="ordered locus">RSP_0553</name>
</gene>
<protein>
    <recommendedName>
        <fullName evidence="1">Holliday junction branch migration complex subunit RuvB</fullName>
        <ecNumber evidence="1">3.6.4.-</ecNumber>
    </recommendedName>
</protein>
<organism>
    <name type="scientific">Cereibacter sphaeroides (strain ATCC 17023 / DSM 158 / JCM 6121 / CCUG 31486 / LMG 2827 / NBRC 12203 / NCIMB 8253 / ATH 2.4.1.)</name>
    <name type="common">Rhodobacter sphaeroides</name>
    <dbReference type="NCBI Taxonomy" id="272943"/>
    <lineage>
        <taxon>Bacteria</taxon>
        <taxon>Pseudomonadati</taxon>
        <taxon>Pseudomonadota</taxon>
        <taxon>Alphaproteobacteria</taxon>
        <taxon>Rhodobacterales</taxon>
        <taxon>Paracoccaceae</taxon>
        <taxon>Cereibacter</taxon>
    </lineage>
</organism>
<evidence type="ECO:0000255" key="1">
    <source>
        <dbReference type="HAMAP-Rule" id="MF_00016"/>
    </source>
</evidence>
<comment type="function">
    <text evidence="1">The RuvA-RuvB-RuvC complex processes Holliday junction (HJ) DNA during genetic recombination and DNA repair, while the RuvA-RuvB complex plays an important role in the rescue of blocked DNA replication forks via replication fork reversal (RFR). RuvA specifically binds to HJ cruciform DNA, conferring on it an open structure. The RuvB hexamer acts as an ATP-dependent pump, pulling dsDNA into and through the RuvAB complex. RuvB forms 2 homohexamers on either side of HJ DNA bound by 1 or 2 RuvA tetramers; 4 subunits per hexamer contact DNA at a time. Coordinated motions by a converter formed by DNA-disengaged RuvB subunits stimulates ATP hydrolysis and nucleotide exchange. Immobilization of the converter enables RuvB to convert the ATP-contained energy into a lever motion, pulling 2 nucleotides of DNA out of the RuvA tetramer per ATP hydrolyzed, thus driving DNA branch migration. The RuvB motors rotate together with the DNA substrate, which together with the progressing nucleotide cycle form the mechanistic basis for DNA recombination by continuous HJ branch migration. Branch migration allows RuvC to scan DNA until it finds its consensus sequence, where it cleaves and resolves cruciform DNA.</text>
</comment>
<comment type="catalytic activity">
    <reaction evidence="1">
        <text>ATP + H2O = ADP + phosphate + H(+)</text>
        <dbReference type="Rhea" id="RHEA:13065"/>
        <dbReference type="ChEBI" id="CHEBI:15377"/>
        <dbReference type="ChEBI" id="CHEBI:15378"/>
        <dbReference type="ChEBI" id="CHEBI:30616"/>
        <dbReference type="ChEBI" id="CHEBI:43474"/>
        <dbReference type="ChEBI" id="CHEBI:456216"/>
    </reaction>
</comment>
<comment type="subunit">
    <text evidence="1">Homohexamer. Forms an RuvA(8)-RuvB(12)-Holliday junction (HJ) complex. HJ DNA is sandwiched between 2 RuvA tetramers; dsDNA enters through RuvA and exits via RuvB. An RuvB hexamer assembles on each DNA strand where it exits the tetramer. Each RuvB hexamer is contacted by two RuvA subunits (via domain III) on 2 adjacent RuvB subunits; this complex drives branch migration. In the full resolvosome a probable DNA-RuvA(4)-RuvB(12)-RuvC(2) complex forms which resolves the HJ.</text>
</comment>
<comment type="subcellular location">
    <subcellularLocation>
        <location evidence="1">Cytoplasm</location>
    </subcellularLocation>
</comment>
<comment type="domain">
    <text evidence="1">Has 3 domains, the large (RuvB-L) and small ATPase (RuvB-S) domains and the C-terminal head (RuvB-H) domain. The head domain binds DNA, while the ATPase domains jointly bind ATP, ADP or are empty depending on the state of the subunit in the translocation cycle. During a single DNA translocation step the structure of each domain remains the same, but their relative positions change.</text>
</comment>
<comment type="similarity">
    <text evidence="1">Belongs to the RuvB family.</text>
</comment>
<accession>Q3J0F8</accession>